<reference key="1">
    <citation type="journal article" date="2005" name="J. Bacteriol.">
        <title>Insights into genome plasticity and pathogenicity of the plant pathogenic Bacterium Xanthomonas campestris pv. vesicatoria revealed by the complete genome sequence.</title>
        <authorList>
            <person name="Thieme F."/>
            <person name="Koebnik R."/>
            <person name="Bekel T."/>
            <person name="Berger C."/>
            <person name="Boch J."/>
            <person name="Buettner D."/>
            <person name="Caldana C."/>
            <person name="Gaigalat L."/>
            <person name="Goesmann A."/>
            <person name="Kay S."/>
            <person name="Kirchner O."/>
            <person name="Lanz C."/>
            <person name="Linke B."/>
            <person name="McHardy A.C."/>
            <person name="Meyer F."/>
            <person name="Mittenhuber G."/>
            <person name="Nies D.H."/>
            <person name="Niesbach-Kloesgen U."/>
            <person name="Patschkowski T."/>
            <person name="Rueckert C."/>
            <person name="Rupp O."/>
            <person name="Schneiker S."/>
            <person name="Schuster S.C."/>
            <person name="Vorhoelter F.J."/>
            <person name="Weber E."/>
            <person name="Puehler A."/>
            <person name="Bonas U."/>
            <person name="Bartels D."/>
            <person name="Kaiser O."/>
        </authorList>
    </citation>
    <scope>NUCLEOTIDE SEQUENCE [LARGE SCALE GENOMIC DNA]</scope>
    <source>
        <strain>85-10</strain>
    </source>
</reference>
<protein>
    <recommendedName>
        <fullName evidence="1">Large ribosomal subunit protein bL27</fullName>
    </recommendedName>
    <alternativeName>
        <fullName evidence="2">50S ribosomal protein L27</fullName>
    </alternativeName>
</protein>
<feature type="chain" id="PRO_1000017646" description="Large ribosomal subunit protein bL27">
    <location>
        <begin position="1"/>
        <end position="86"/>
    </location>
</feature>
<sequence length="86" mass="9101">MAHKKGVGSSRNGRDSNPKYLGVKIFGGQAIDAGNIIVRQRGTQFHPGAGVGLGRDHTLFALVDGKVEFSTKGPKKRRTVSVVAEA</sequence>
<accession>Q3BW47</accession>
<name>RL27_XANE5</name>
<evidence type="ECO:0000255" key="1">
    <source>
        <dbReference type="HAMAP-Rule" id="MF_00539"/>
    </source>
</evidence>
<evidence type="ECO:0000305" key="2"/>
<comment type="similarity">
    <text evidence="1">Belongs to the bacterial ribosomal protein bL27 family.</text>
</comment>
<dbReference type="EMBL" id="AM039952">
    <property type="protein sequence ID" value="CAJ22916.1"/>
    <property type="molecule type" value="Genomic_DNA"/>
</dbReference>
<dbReference type="RefSeq" id="WP_003484326.1">
    <property type="nucleotide sequence ID" value="NZ_CP017190.1"/>
</dbReference>
<dbReference type="SMR" id="Q3BW47"/>
<dbReference type="STRING" id="456327.BJD11_16190"/>
<dbReference type="GeneID" id="97509599"/>
<dbReference type="KEGG" id="xcv:XCV1285"/>
<dbReference type="eggNOG" id="COG0211">
    <property type="taxonomic scope" value="Bacteria"/>
</dbReference>
<dbReference type="HOGENOM" id="CLU_095424_4_0_6"/>
<dbReference type="Proteomes" id="UP000007069">
    <property type="component" value="Chromosome"/>
</dbReference>
<dbReference type="GO" id="GO:0022625">
    <property type="term" value="C:cytosolic large ribosomal subunit"/>
    <property type="evidence" value="ECO:0007669"/>
    <property type="project" value="TreeGrafter"/>
</dbReference>
<dbReference type="GO" id="GO:0003735">
    <property type="term" value="F:structural constituent of ribosome"/>
    <property type="evidence" value="ECO:0007669"/>
    <property type="project" value="InterPro"/>
</dbReference>
<dbReference type="GO" id="GO:0006412">
    <property type="term" value="P:translation"/>
    <property type="evidence" value="ECO:0007669"/>
    <property type="project" value="UniProtKB-UniRule"/>
</dbReference>
<dbReference type="FunFam" id="2.40.50.100:FF:000001">
    <property type="entry name" value="50S ribosomal protein L27"/>
    <property type="match status" value="1"/>
</dbReference>
<dbReference type="Gene3D" id="2.40.50.100">
    <property type="match status" value="1"/>
</dbReference>
<dbReference type="HAMAP" id="MF_00539">
    <property type="entry name" value="Ribosomal_bL27"/>
    <property type="match status" value="1"/>
</dbReference>
<dbReference type="InterPro" id="IPR001684">
    <property type="entry name" value="Ribosomal_bL27"/>
</dbReference>
<dbReference type="InterPro" id="IPR018261">
    <property type="entry name" value="Ribosomal_bL27_CS"/>
</dbReference>
<dbReference type="NCBIfam" id="TIGR00062">
    <property type="entry name" value="L27"/>
    <property type="match status" value="1"/>
</dbReference>
<dbReference type="PANTHER" id="PTHR15893:SF0">
    <property type="entry name" value="LARGE RIBOSOMAL SUBUNIT PROTEIN BL27M"/>
    <property type="match status" value="1"/>
</dbReference>
<dbReference type="PANTHER" id="PTHR15893">
    <property type="entry name" value="RIBOSOMAL PROTEIN L27"/>
    <property type="match status" value="1"/>
</dbReference>
<dbReference type="Pfam" id="PF01016">
    <property type="entry name" value="Ribosomal_L27"/>
    <property type="match status" value="1"/>
</dbReference>
<dbReference type="PRINTS" id="PR00063">
    <property type="entry name" value="RIBOSOMALL27"/>
</dbReference>
<dbReference type="SUPFAM" id="SSF110324">
    <property type="entry name" value="Ribosomal L27 protein-like"/>
    <property type="match status" value="1"/>
</dbReference>
<dbReference type="PROSITE" id="PS00831">
    <property type="entry name" value="RIBOSOMAL_L27"/>
    <property type="match status" value="1"/>
</dbReference>
<keyword id="KW-0687">Ribonucleoprotein</keyword>
<keyword id="KW-0689">Ribosomal protein</keyword>
<gene>
    <name evidence="1" type="primary">rpmA</name>
    <name type="ordered locus">XCV1285</name>
</gene>
<organism>
    <name type="scientific">Xanthomonas euvesicatoria pv. vesicatoria (strain 85-10)</name>
    <name type="common">Xanthomonas campestris pv. vesicatoria</name>
    <dbReference type="NCBI Taxonomy" id="316273"/>
    <lineage>
        <taxon>Bacteria</taxon>
        <taxon>Pseudomonadati</taxon>
        <taxon>Pseudomonadota</taxon>
        <taxon>Gammaproteobacteria</taxon>
        <taxon>Lysobacterales</taxon>
        <taxon>Lysobacteraceae</taxon>
        <taxon>Xanthomonas</taxon>
    </lineage>
</organism>
<proteinExistence type="inferred from homology"/>